<protein>
    <recommendedName>
        <fullName evidence="1">Geranylgeranylglyceryl phosphate synthase</fullName>
        <shortName evidence="1">GGGP synthase</shortName>
        <shortName evidence="1">GGGPS</shortName>
        <ecNumber evidence="1">2.5.1.41</ecNumber>
    </recommendedName>
    <alternativeName>
        <fullName evidence="1">(S)-3-O-geranylgeranylglyceryl phosphate synthase</fullName>
    </alternativeName>
    <alternativeName>
        <fullName evidence="1">Phosphoglycerol geranylgeranyltransferase</fullName>
    </alternativeName>
</protein>
<name>GGGPS_METPE</name>
<feature type="chain" id="PRO_1000119133" description="Geranylgeranylglyceryl phosphate synthase">
    <location>
        <begin position="1"/>
        <end position="228"/>
    </location>
</feature>
<feature type="binding site" evidence="1">
    <location>
        <position position="13"/>
    </location>
    <ligand>
        <name>sn-glycerol 1-phosphate</name>
        <dbReference type="ChEBI" id="CHEBI:57685"/>
    </ligand>
</feature>
<feature type="binding site" evidence="1">
    <location>
        <position position="15"/>
    </location>
    <ligand>
        <name>Mg(2+)</name>
        <dbReference type="ChEBI" id="CHEBI:18420"/>
    </ligand>
</feature>
<feature type="binding site" evidence="1">
    <location>
        <position position="41"/>
    </location>
    <ligand>
        <name>Mg(2+)</name>
        <dbReference type="ChEBI" id="CHEBI:18420"/>
    </ligand>
</feature>
<feature type="binding site" evidence="1">
    <location>
        <begin position="159"/>
        <end position="164"/>
    </location>
    <ligand>
        <name>sn-glycerol 1-phosphate</name>
        <dbReference type="ChEBI" id="CHEBI:57685"/>
    </ligand>
</feature>
<feature type="binding site" evidence="1">
    <location>
        <position position="189"/>
    </location>
    <ligand>
        <name>sn-glycerol 1-phosphate</name>
        <dbReference type="ChEBI" id="CHEBI:57685"/>
    </ligand>
</feature>
<feature type="binding site" evidence="1">
    <location>
        <begin position="209"/>
        <end position="210"/>
    </location>
    <ligand>
        <name>sn-glycerol 1-phosphate</name>
        <dbReference type="ChEBI" id="CHEBI:57685"/>
    </ligand>
</feature>
<reference key="1">
    <citation type="journal article" date="2015" name="Genome Announc.">
        <title>Complete Genome Sequence of Methanosphaerula palustris E1-9CT, a Hydrogenotrophic Methanogen Isolated from a Minerotrophic Fen Peatland.</title>
        <authorList>
            <person name="Cadillo-Quiroz H."/>
            <person name="Browne P."/>
            <person name="Kyrpides N."/>
            <person name="Woyke T."/>
            <person name="Goodwin L."/>
            <person name="Detter C."/>
            <person name="Yavitt J.B."/>
            <person name="Zinder S.H."/>
        </authorList>
    </citation>
    <scope>NUCLEOTIDE SEQUENCE [LARGE SCALE GENOMIC DNA]</scope>
    <source>
        <strain>ATCC BAA-1556 / DSM 19958 / E1-9c</strain>
    </source>
</reference>
<comment type="function">
    <text evidence="1">Prenyltransferase that catalyzes the transfer of the geranylgeranyl moiety of geranylgeranyl diphosphate (GGPP) to the C3 hydroxyl of sn-glycerol-1-phosphate (G1P). This reaction is the first ether-bond-formation step in the biosynthesis of archaeal membrane lipids.</text>
</comment>
<comment type="catalytic activity">
    <reaction evidence="1">
        <text>sn-glycerol 1-phosphate + (2E,6E,10E)-geranylgeranyl diphosphate = sn-3-O-(geranylgeranyl)glycerol 1-phosphate + diphosphate</text>
        <dbReference type="Rhea" id="RHEA:23404"/>
        <dbReference type="ChEBI" id="CHEBI:33019"/>
        <dbReference type="ChEBI" id="CHEBI:57677"/>
        <dbReference type="ChEBI" id="CHEBI:57685"/>
        <dbReference type="ChEBI" id="CHEBI:58756"/>
        <dbReference type="EC" id="2.5.1.41"/>
    </reaction>
</comment>
<comment type="cofactor">
    <cofactor evidence="1">
        <name>Mg(2+)</name>
        <dbReference type="ChEBI" id="CHEBI:18420"/>
    </cofactor>
</comment>
<comment type="pathway">
    <text evidence="1">Membrane lipid metabolism; glycerophospholipid metabolism.</text>
</comment>
<comment type="subcellular location">
    <subcellularLocation>
        <location evidence="1">Cytoplasm</location>
    </subcellularLocation>
</comment>
<comment type="similarity">
    <text evidence="1">Belongs to the GGGP/HepGP synthase family. Group I subfamily.</text>
</comment>
<sequence>MQNRWKDWVHVTKLDPDKSLPPAVIDEIATSGTDALMLSGTLNVTIENLGHLFKQVAQYGLPLVVEPAGPEAVLCEGIDLLFVPSVMNSNSVQWIVGKHQQWAQQSSIRWDKVIPEAYIVLNSSSSVGKVTGADCGLTPAEAAAYASVADHYFRFPIVYVEYSGMYGDPKMVRSIAEVVDRAILYYGGGISSADKAAEMGRWADTIVVGNAVYDLGPDVLRATVKAVQ</sequence>
<keyword id="KW-0963">Cytoplasm</keyword>
<keyword id="KW-0444">Lipid biosynthesis</keyword>
<keyword id="KW-0443">Lipid metabolism</keyword>
<keyword id="KW-0460">Magnesium</keyword>
<keyword id="KW-0479">Metal-binding</keyword>
<keyword id="KW-0594">Phospholipid biosynthesis</keyword>
<keyword id="KW-1208">Phospholipid metabolism</keyword>
<keyword id="KW-1185">Reference proteome</keyword>
<keyword id="KW-0808">Transferase</keyword>
<proteinExistence type="inferred from homology"/>
<organism>
    <name type="scientific">Methanosphaerula palustris (strain ATCC BAA-1556 / DSM 19958 / E1-9c)</name>
    <dbReference type="NCBI Taxonomy" id="521011"/>
    <lineage>
        <taxon>Archaea</taxon>
        <taxon>Methanobacteriati</taxon>
        <taxon>Methanobacteriota</taxon>
        <taxon>Stenosarchaea group</taxon>
        <taxon>Methanomicrobia</taxon>
        <taxon>Methanomicrobiales</taxon>
        <taxon>Methanoregulaceae</taxon>
        <taxon>Methanosphaerula</taxon>
    </lineage>
</organism>
<accession>B8GHM9</accession>
<dbReference type="EC" id="2.5.1.41" evidence="1"/>
<dbReference type="EMBL" id="CP001338">
    <property type="protein sequence ID" value="ACL16634.1"/>
    <property type="molecule type" value="Genomic_DNA"/>
</dbReference>
<dbReference type="RefSeq" id="WP_012617953.1">
    <property type="nucleotide sequence ID" value="NC_011832.1"/>
</dbReference>
<dbReference type="SMR" id="B8GHM9"/>
<dbReference type="STRING" id="521011.Mpal_1300"/>
<dbReference type="GeneID" id="7271160"/>
<dbReference type="KEGG" id="mpl:Mpal_1300"/>
<dbReference type="eggNOG" id="arCOG01085">
    <property type="taxonomic scope" value="Archaea"/>
</dbReference>
<dbReference type="HOGENOM" id="CLU_095211_0_0_2"/>
<dbReference type="OrthoDB" id="49758at2157"/>
<dbReference type="UniPathway" id="UPA00940"/>
<dbReference type="Proteomes" id="UP000002457">
    <property type="component" value="Chromosome"/>
</dbReference>
<dbReference type="GO" id="GO:0005737">
    <property type="term" value="C:cytoplasm"/>
    <property type="evidence" value="ECO:0007669"/>
    <property type="project" value="UniProtKB-SubCell"/>
</dbReference>
<dbReference type="GO" id="GO:0000287">
    <property type="term" value="F:magnesium ion binding"/>
    <property type="evidence" value="ECO:0007669"/>
    <property type="project" value="UniProtKB-UniRule"/>
</dbReference>
<dbReference type="GO" id="GO:0047294">
    <property type="term" value="F:phosphoglycerol geranylgeranyltransferase activity"/>
    <property type="evidence" value="ECO:0007669"/>
    <property type="project" value="UniProtKB-UniRule"/>
</dbReference>
<dbReference type="GO" id="GO:0046474">
    <property type="term" value="P:glycerophospholipid biosynthetic process"/>
    <property type="evidence" value="ECO:0007669"/>
    <property type="project" value="UniProtKB-UniRule"/>
</dbReference>
<dbReference type="CDD" id="cd02812">
    <property type="entry name" value="PcrB_like"/>
    <property type="match status" value="1"/>
</dbReference>
<dbReference type="Gene3D" id="3.20.20.390">
    <property type="entry name" value="FMN-linked oxidoreductases"/>
    <property type="match status" value="1"/>
</dbReference>
<dbReference type="HAMAP" id="MF_00112">
    <property type="entry name" value="GGGP_HepGP_synthase"/>
    <property type="match status" value="1"/>
</dbReference>
<dbReference type="InterPro" id="IPR039074">
    <property type="entry name" value="GGGP/HepGP_synthase_I"/>
</dbReference>
<dbReference type="InterPro" id="IPR038597">
    <property type="entry name" value="GGGP/HepGP_synthase_sf"/>
</dbReference>
<dbReference type="InterPro" id="IPR008205">
    <property type="entry name" value="GGGP_HepGP_synthase"/>
</dbReference>
<dbReference type="InterPro" id="IPR026438">
    <property type="entry name" value="GGGP_synthase_archaea"/>
</dbReference>
<dbReference type="NCBIfam" id="TIGR01768">
    <property type="entry name" value="GGGP-family"/>
    <property type="match status" value="1"/>
</dbReference>
<dbReference type="NCBIfam" id="TIGR04146">
    <property type="entry name" value="GGGPS_Afulg"/>
    <property type="match status" value="1"/>
</dbReference>
<dbReference type="NCBIfam" id="NF003199">
    <property type="entry name" value="PRK04169.1-3"/>
    <property type="match status" value="1"/>
</dbReference>
<dbReference type="PANTHER" id="PTHR40029">
    <property type="match status" value="1"/>
</dbReference>
<dbReference type="PANTHER" id="PTHR40029:SF2">
    <property type="entry name" value="HEPTAPRENYLGLYCERYL PHOSPHATE SYNTHASE"/>
    <property type="match status" value="1"/>
</dbReference>
<dbReference type="Pfam" id="PF01884">
    <property type="entry name" value="PcrB"/>
    <property type="match status" value="1"/>
</dbReference>
<dbReference type="SUPFAM" id="SSF51395">
    <property type="entry name" value="FMN-linked oxidoreductases"/>
    <property type="match status" value="1"/>
</dbReference>
<gene>
    <name type="ordered locus">Mpal_1300</name>
</gene>
<evidence type="ECO:0000255" key="1">
    <source>
        <dbReference type="HAMAP-Rule" id="MF_00112"/>
    </source>
</evidence>